<protein>
    <recommendedName>
        <fullName>Ubiquinone biosynthesis protein COQ4 homolog 2, mitochondrial</fullName>
    </recommendedName>
    <alternativeName>
        <fullName>4-hydroxy-3-methoxy-5-polyprenylbenzoate decarboxylase</fullName>
        <ecNumber evidence="1">4.1.1.130</ecNumber>
    </alternativeName>
    <alternativeName>
        <fullName evidence="1">Coenzyme Q biosynthesis protein 4 homolog 2</fullName>
    </alternativeName>
</protein>
<reference key="1">
    <citation type="journal article" date="2005" name="Science">
        <title>The genome sequence of Trypanosoma cruzi, etiologic agent of Chagas disease.</title>
        <authorList>
            <person name="El-Sayed N.M.A."/>
            <person name="Myler P.J."/>
            <person name="Bartholomeu D.C."/>
            <person name="Nilsson D."/>
            <person name="Aggarwal G."/>
            <person name="Tran A.-N."/>
            <person name="Ghedin E."/>
            <person name="Worthey E.A."/>
            <person name="Delcher A.L."/>
            <person name="Blandin G."/>
            <person name="Westenberger S.J."/>
            <person name="Caler E."/>
            <person name="Cerqueira G.C."/>
            <person name="Branche C."/>
            <person name="Haas B."/>
            <person name="Anupama A."/>
            <person name="Arner E."/>
            <person name="Aslund L."/>
            <person name="Attipoe P."/>
            <person name="Bontempi E."/>
            <person name="Bringaud F."/>
            <person name="Burton P."/>
            <person name="Cadag E."/>
            <person name="Campbell D.A."/>
            <person name="Carrington M."/>
            <person name="Crabtree J."/>
            <person name="Darban H."/>
            <person name="da Silveira J.F."/>
            <person name="de Jong P."/>
            <person name="Edwards K."/>
            <person name="Englund P.T."/>
            <person name="Fazelina G."/>
            <person name="Feldblyum T."/>
            <person name="Ferella M."/>
            <person name="Frasch A.C."/>
            <person name="Gull K."/>
            <person name="Horn D."/>
            <person name="Hou L."/>
            <person name="Huang Y."/>
            <person name="Kindlund E."/>
            <person name="Klingbeil M."/>
            <person name="Kluge S."/>
            <person name="Koo H."/>
            <person name="Lacerda D."/>
            <person name="Levin M.J."/>
            <person name="Lorenzi H."/>
            <person name="Louie T."/>
            <person name="Machado C.R."/>
            <person name="McCulloch R."/>
            <person name="McKenna A."/>
            <person name="Mizuno Y."/>
            <person name="Mottram J.C."/>
            <person name="Nelson S."/>
            <person name="Ochaya S."/>
            <person name="Osoegawa K."/>
            <person name="Pai G."/>
            <person name="Parsons M."/>
            <person name="Pentony M."/>
            <person name="Pettersson U."/>
            <person name="Pop M."/>
            <person name="Ramirez J.L."/>
            <person name="Rinta J."/>
            <person name="Robertson L."/>
            <person name="Salzberg S.L."/>
            <person name="Sanchez D.O."/>
            <person name="Seyler A."/>
            <person name="Sharma R."/>
            <person name="Shetty J."/>
            <person name="Simpson A.J."/>
            <person name="Sisk E."/>
            <person name="Tammi M.T."/>
            <person name="Tarleton R."/>
            <person name="Teixeira S."/>
            <person name="Van Aken S."/>
            <person name="Vogt C."/>
            <person name="Ward P.N."/>
            <person name="Wickstead B."/>
            <person name="Wortman J."/>
            <person name="White O."/>
            <person name="Fraser C.M."/>
            <person name="Stuart K.D."/>
            <person name="Andersson B."/>
        </authorList>
    </citation>
    <scope>NUCLEOTIDE SEQUENCE [LARGE SCALE GENOMIC DNA]</scope>
    <source>
        <strain>CL Brener</strain>
    </source>
</reference>
<organism>
    <name type="scientific">Trypanosoma cruzi (strain CL Brener)</name>
    <dbReference type="NCBI Taxonomy" id="353153"/>
    <lineage>
        <taxon>Eukaryota</taxon>
        <taxon>Discoba</taxon>
        <taxon>Euglenozoa</taxon>
        <taxon>Kinetoplastea</taxon>
        <taxon>Metakinetoplastina</taxon>
        <taxon>Trypanosomatida</taxon>
        <taxon>Trypanosomatidae</taxon>
        <taxon>Trypanosoma</taxon>
        <taxon>Schizotrypanum</taxon>
    </lineage>
</organism>
<comment type="function">
    <text evidence="1">Lyase that catalyzes the C1-decarboxylation of 4-hydroxy-3-methoxy-5-(all-trans-polyprenyl)benzoic acid into 2-methoxy-6-(all-trans-polyprenyl)phenol during ubiquinone biosynthesis.</text>
</comment>
<comment type="catalytic activity">
    <reaction evidence="1">
        <text>a 4-hydroxy-3-methoxy-5-(all-trans-polyprenyl)benzoate + H(+) = a 2-methoxy-6-(all-trans-polyprenyl)phenol + CO2</text>
        <dbReference type="Rhea" id="RHEA:81179"/>
        <dbReference type="Rhea" id="RHEA-COMP:9551"/>
        <dbReference type="Rhea" id="RHEA-COMP:10931"/>
        <dbReference type="ChEBI" id="CHEBI:15378"/>
        <dbReference type="ChEBI" id="CHEBI:16526"/>
        <dbReference type="ChEBI" id="CHEBI:62731"/>
        <dbReference type="ChEBI" id="CHEBI:84443"/>
        <dbReference type="EC" id="4.1.1.130"/>
    </reaction>
</comment>
<comment type="cofactor">
    <cofactor evidence="1">
        <name>Zn(2+)</name>
        <dbReference type="ChEBI" id="CHEBI:29105"/>
    </cofactor>
</comment>
<comment type="pathway">
    <text evidence="1">Cofactor biosynthesis; ubiquinone biosynthesis.</text>
</comment>
<comment type="subunit">
    <text evidence="1">Component of a multi-subunit COQ enzyme complex.</text>
</comment>
<comment type="subcellular location">
    <subcellularLocation>
        <location evidence="1">Mitochondrion inner membrane</location>
        <topology evidence="1">Peripheral membrane protein</topology>
        <orientation evidence="1">Matrix side</orientation>
    </subcellularLocation>
</comment>
<comment type="miscellaneous">
    <text evidence="1">This protein may be expected to contain an N-terminal transit peptide but none has been predicted.</text>
</comment>
<comment type="similarity">
    <text evidence="1">Belongs to the COQ4 family.</text>
</comment>
<accession>Q4DLX3</accession>
<feature type="chain" id="PRO_0000388088" description="Ubiquinone biosynthesis protein COQ4 homolog 2, mitochondrial">
    <location>
        <begin position="1"/>
        <end position="252"/>
    </location>
</feature>
<feature type="binding site" evidence="1">
    <location>
        <position position="130"/>
    </location>
    <ligand>
        <name>Zn(2+)</name>
        <dbReference type="ChEBI" id="CHEBI:29105"/>
    </ligand>
</feature>
<feature type="binding site" evidence="1">
    <location>
        <position position="131"/>
    </location>
    <ligand>
        <name>Zn(2+)</name>
        <dbReference type="ChEBI" id="CHEBI:29105"/>
    </ligand>
</feature>
<feature type="binding site" evidence="1">
    <location>
        <position position="134"/>
    </location>
    <ligand>
        <name>Zn(2+)</name>
        <dbReference type="ChEBI" id="CHEBI:29105"/>
    </ligand>
</feature>
<feature type="binding site" evidence="1">
    <location>
        <position position="146"/>
    </location>
    <ligand>
        <name>Zn(2+)</name>
        <dbReference type="ChEBI" id="CHEBI:29105"/>
    </ligand>
</feature>
<keyword id="KW-0456">Lyase</keyword>
<keyword id="KW-0472">Membrane</keyword>
<keyword id="KW-0479">Metal-binding</keyword>
<keyword id="KW-0496">Mitochondrion</keyword>
<keyword id="KW-0999">Mitochondrion inner membrane</keyword>
<keyword id="KW-1185">Reference proteome</keyword>
<keyword id="KW-0831">Ubiquinone biosynthesis</keyword>
<keyword id="KW-0862">Zinc</keyword>
<dbReference type="EC" id="4.1.1.130" evidence="1"/>
<dbReference type="EMBL" id="AAHK01000343">
    <property type="protein sequence ID" value="EAN93531.1"/>
    <property type="molecule type" value="Genomic_DNA"/>
</dbReference>
<dbReference type="RefSeq" id="XP_815382.1">
    <property type="nucleotide sequence ID" value="XM_810289.1"/>
</dbReference>
<dbReference type="SMR" id="Q4DLX3"/>
<dbReference type="FunCoup" id="Q4DLX3">
    <property type="interactions" value="297"/>
</dbReference>
<dbReference type="STRING" id="353153.Q4DLX3"/>
<dbReference type="PaxDb" id="353153-Q4DLX3"/>
<dbReference type="EnsemblProtists" id="EAN93531">
    <property type="protein sequence ID" value="EAN93531"/>
    <property type="gene ID" value="Tc00.1047053506753.170"/>
</dbReference>
<dbReference type="GeneID" id="3547080"/>
<dbReference type="KEGG" id="tcr:506753.170"/>
<dbReference type="eggNOG" id="KOG3244">
    <property type="taxonomic scope" value="Eukaryota"/>
</dbReference>
<dbReference type="InParanoid" id="Q4DLX3"/>
<dbReference type="OMA" id="WFEMINT"/>
<dbReference type="UniPathway" id="UPA00232"/>
<dbReference type="Proteomes" id="UP000002296">
    <property type="component" value="Unassembled WGS sequence"/>
</dbReference>
<dbReference type="GO" id="GO:0031314">
    <property type="term" value="C:extrinsic component of mitochondrial inner membrane"/>
    <property type="evidence" value="ECO:0007669"/>
    <property type="project" value="UniProtKB-UniRule"/>
</dbReference>
<dbReference type="GO" id="GO:0006744">
    <property type="term" value="P:ubiquinone biosynthetic process"/>
    <property type="evidence" value="ECO:0007669"/>
    <property type="project" value="UniProtKB-UniRule"/>
</dbReference>
<dbReference type="HAMAP" id="MF_03111">
    <property type="entry name" value="Coq4"/>
    <property type="match status" value="1"/>
</dbReference>
<dbReference type="InterPro" id="IPR007715">
    <property type="entry name" value="Coq4"/>
</dbReference>
<dbReference type="InterPro" id="IPR027540">
    <property type="entry name" value="Coq4_euk"/>
</dbReference>
<dbReference type="PANTHER" id="PTHR12922">
    <property type="entry name" value="UBIQUINONE BIOSYNTHESIS PROTEIN"/>
    <property type="match status" value="1"/>
</dbReference>
<dbReference type="PANTHER" id="PTHR12922:SF7">
    <property type="entry name" value="UBIQUINONE BIOSYNTHESIS PROTEIN COQ4 HOMOLOG, MITOCHONDRIAL"/>
    <property type="match status" value="1"/>
</dbReference>
<dbReference type="Pfam" id="PF05019">
    <property type="entry name" value="Coq4"/>
    <property type="match status" value="1"/>
</dbReference>
<gene>
    <name type="ORF">Tc00.1047053506753.170</name>
</gene>
<name>COQ42_TRYCC</name>
<proteinExistence type="inferred from homology"/>
<evidence type="ECO:0000255" key="1">
    <source>
        <dbReference type="HAMAP-Rule" id="MF_03111"/>
    </source>
</evidence>
<sequence>MLKSGFYLLGGVVGAASSLPAFLAATTRSIWDPVNAGDVAAVGEITALTALEHMKQSMMSDRTGRMILRTQPRVTDETLEFASRQPPGTFGHRYAQFMKFNRFTPNGRTPVAHVADPTLAYVMQRQRETHDFLHTCIGCGRTVEEEIIVKLLEWRHTGLPIGLLAVIGSLPWLSRQQLRNMELYFEWAEVNAPNQRHGEVYIPYITNVWWESYLDKPYEQLLADTGITPIDVFLQQKKGKAALANGEAIDGK</sequence>